<sequence>MRLSFIIFAISLLAGGSGAAEALHPASDVLTLRGTNQGASTGKRSLRYDNNAERAGEEDDEERAFPGAEELSRLANLAHTSKADSLGTSLKNFFKQLDKANVNPSNIHKYGFSGEEFDQLRKRFGTWYRHYKDIE</sequence>
<accession>D0NIW0</accession>
<organism>
    <name type="scientific">Phytophthora infestans (strain T30-4)</name>
    <name type="common">Potato late blight agent</name>
    <dbReference type="NCBI Taxonomy" id="403677"/>
    <lineage>
        <taxon>Eukaryota</taxon>
        <taxon>Sar</taxon>
        <taxon>Stramenopiles</taxon>
        <taxon>Oomycota</taxon>
        <taxon>Peronosporales</taxon>
        <taxon>Peronosporaceae</taxon>
        <taxon>Phytophthora</taxon>
    </lineage>
</organism>
<feature type="signal peptide" evidence="1">
    <location>
        <begin position="1"/>
        <end position="19"/>
    </location>
</feature>
<feature type="chain" id="PRO_5003012475" description="RxLR effector protein Avr10">
    <location>
        <begin position="20"/>
        <end position="135"/>
    </location>
</feature>
<feature type="region of interest" description="Disordered" evidence="2">
    <location>
        <begin position="34"/>
        <end position="64"/>
    </location>
</feature>
<feature type="short sequence motif" description="RxLR-dEER" evidence="10">
    <location>
        <begin position="44"/>
        <end position="63"/>
    </location>
</feature>
<feature type="compositionally biased region" description="Polar residues" evidence="2">
    <location>
        <begin position="34"/>
        <end position="43"/>
    </location>
</feature>
<feature type="compositionally biased region" description="Basic and acidic residues" evidence="2">
    <location>
        <begin position="46"/>
        <end position="55"/>
    </location>
</feature>
<proteinExistence type="evidence at transcript level"/>
<comment type="function">
    <text evidence="3 7">Secreted effector that acts as an elicitor of hypersensitive response (HR) specifically on plants carrying defense protein R10 (PubMed:11768540). Enhances P.infestans colonization of Nicotiana benthamiana leaves (PubMed:30329083).</text>
</comment>
<comment type="subcellular location">
    <subcellularLocation>
        <location evidence="7">Secreted</location>
    </subcellularLocation>
    <subcellularLocation>
        <location evidence="7">Host nucleus</location>
    </subcellularLocation>
    <subcellularLocation>
        <location evidence="7">Host cytoplasm</location>
    </subcellularLocation>
</comment>
<comment type="induction">
    <text evidence="4 5 6">Expression is induced during host plant infection.</text>
</comment>
<comment type="domain">
    <text evidence="10">The RxLR-dEER motif acts to carry the protein into the host cell cytoplasm through binding to cell surface phosphatidylinositol-3-phosphate.</text>
</comment>
<comment type="disruption phenotype">
    <text evidence="3">Leads to gain of virulence on potato lines carrying defense protein R10.</text>
</comment>
<comment type="similarity">
    <text evidence="9">Belongs to the RxLR effector family.</text>
</comment>
<protein>
    <recommendedName>
        <fullName evidence="8">RxLR effector protein Avr10</fullName>
    </recommendedName>
    <alternativeName>
        <fullName evidence="8">Avirulence protein 10</fullName>
    </alternativeName>
</protein>
<keyword id="KW-1035">Host cytoplasm</keyword>
<keyword id="KW-1048">Host nucleus</keyword>
<keyword id="KW-1185">Reference proteome</keyword>
<keyword id="KW-0964">Secreted</keyword>
<keyword id="KW-0732">Signal</keyword>
<keyword id="KW-0843">Virulence</keyword>
<evidence type="ECO:0000255" key="1"/>
<evidence type="ECO:0000256" key="2">
    <source>
        <dbReference type="SAM" id="MobiDB-lite"/>
    </source>
</evidence>
<evidence type="ECO:0000269" key="3">
    <source>
    </source>
</evidence>
<evidence type="ECO:0000269" key="4">
    <source>
    </source>
</evidence>
<evidence type="ECO:0000269" key="5">
    <source>
    </source>
</evidence>
<evidence type="ECO:0000269" key="6">
    <source>
    </source>
</evidence>
<evidence type="ECO:0000269" key="7">
    <source>
    </source>
</evidence>
<evidence type="ECO:0000303" key="8">
    <source>
    </source>
</evidence>
<evidence type="ECO:0000305" key="9"/>
<evidence type="ECO:0000305" key="10">
    <source>
    </source>
</evidence>
<gene>
    <name evidence="8" type="primary">Avr10</name>
    <name type="ORF">PITG_11484</name>
</gene>
<name>AVR10_PHYIT</name>
<dbReference type="EMBL" id="DS028140">
    <property type="protein sequence ID" value="EEY59444.1"/>
    <property type="molecule type" value="Genomic_DNA"/>
</dbReference>
<dbReference type="RefSeq" id="XP_002901054.1">
    <property type="nucleotide sequence ID" value="XM_002901008.1"/>
</dbReference>
<dbReference type="STRING" id="403677.D0NIW0"/>
<dbReference type="EnsemblProtists" id="PITG_11484T0">
    <property type="protein sequence ID" value="PITG_11484T0"/>
    <property type="gene ID" value="PITG_11484"/>
</dbReference>
<dbReference type="GeneID" id="9474826"/>
<dbReference type="KEGG" id="pif:PITG_11484"/>
<dbReference type="VEuPathDB" id="FungiDB:PITG_11484"/>
<dbReference type="eggNOG" id="ENOG502RGK4">
    <property type="taxonomic scope" value="Eukaryota"/>
</dbReference>
<dbReference type="HOGENOM" id="CLU_140782_0_0_1"/>
<dbReference type="InParanoid" id="D0NIW0"/>
<dbReference type="OMA" id="GTWYRHY"/>
<dbReference type="OrthoDB" id="10485562at2759"/>
<dbReference type="Proteomes" id="UP000006643">
    <property type="component" value="Partially assembled WGS sequence"/>
</dbReference>
<dbReference type="GO" id="GO:0005576">
    <property type="term" value="C:extracellular region"/>
    <property type="evidence" value="ECO:0007669"/>
    <property type="project" value="UniProtKB-SubCell"/>
</dbReference>
<dbReference type="GO" id="GO:0030430">
    <property type="term" value="C:host cell cytoplasm"/>
    <property type="evidence" value="ECO:0007669"/>
    <property type="project" value="UniProtKB-SubCell"/>
</dbReference>
<dbReference type="GO" id="GO:0042025">
    <property type="term" value="C:host cell nucleus"/>
    <property type="evidence" value="ECO:0007669"/>
    <property type="project" value="UniProtKB-SubCell"/>
</dbReference>
<reference key="1">
    <citation type="journal article" date="2009" name="Nature">
        <title>Genome sequence and analysis of the Irish potato famine pathogen Phytophthora infestans.</title>
        <authorList>
            <consortium name="The Broad Institute Genome Sequencing Platform"/>
            <person name="Haas B.J."/>
            <person name="Kamoun S."/>
            <person name="Zody M.C."/>
            <person name="Jiang R.H."/>
            <person name="Handsaker R.E."/>
            <person name="Cano L.M."/>
            <person name="Grabherr M."/>
            <person name="Kodira C.D."/>
            <person name="Raffaele S."/>
            <person name="Torto-Alalibo T."/>
            <person name="Bozkurt T.O."/>
            <person name="Ah-Fong A.M."/>
            <person name="Alvarado L."/>
            <person name="Anderson V.L."/>
            <person name="Armstrong M.R."/>
            <person name="Avrova A."/>
            <person name="Baxter L."/>
            <person name="Beynon J."/>
            <person name="Boevink P.C."/>
            <person name="Bollmann S.R."/>
            <person name="Bos J.I."/>
            <person name="Bulone V."/>
            <person name="Cai G."/>
            <person name="Cakir C."/>
            <person name="Carrington J.C."/>
            <person name="Chawner M."/>
            <person name="Conti L."/>
            <person name="Costanzo S."/>
            <person name="Ewan R."/>
            <person name="Fahlgren N."/>
            <person name="Fischbach M.A."/>
            <person name="Fugelstad J."/>
            <person name="Gilroy E.M."/>
            <person name="Gnerre S."/>
            <person name="Green P.J."/>
            <person name="Grenville-Briggs L.J."/>
            <person name="Griffith J."/>
            <person name="Grunwald N.J."/>
            <person name="Horn K."/>
            <person name="Horner N.R."/>
            <person name="Hu C.H."/>
            <person name="Huitema E."/>
            <person name="Jeong D.H."/>
            <person name="Jones A.M."/>
            <person name="Jones J.D."/>
            <person name="Jones R.W."/>
            <person name="Karlsson E.K."/>
            <person name="Kunjeti S.G."/>
            <person name="Lamour K."/>
            <person name="Liu Z."/>
            <person name="Ma L."/>
            <person name="Maclean D."/>
            <person name="Chibucos M.C."/>
            <person name="McDonald H."/>
            <person name="McWalters J."/>
            <person name="Meijer H.J."/>
            <person name="Morgan W."/>
            <person name="Morris P.F."/>
            <person name="Munro C.A."/>
            <person name="O'Neill K."/>
            <person name="Ospina-Giraldo M."/>
            <person name="Pinzon A."/>
            <person name="Pritchard L."/>
            <person name="Ramsahoye B."/>
            <person name="Ren Q."/>
            <person name="Restrepo S."/>
            <person name="Roy S."/>
            <person name="Sadanandom A."/>
            <person name="Savidor A."/>
            <person name="Schornack S."/>
            <person name="Schwartz D.C."/>
            <person name="Schumann U.D."/>
            <person name="Schwessinger B."/>
            <person name="Seyer L."/>
            <person name="Sharpe T."/>
            <person name="Silvar C."/>
            <person name="Song J."/>
            <person name="Studholme D.J."/>
            <person name="Sykes S."/>
            <person name="Thines M."/>
            <person name="van de Vondervoort P.J."/>
            <person name="Phuntumart V."/>
            <person name="Wawra S."/>
            <person name="Weide R."/>
            <person name="Win J."/>
            <person name="Young C."/>
            <person name="Zhou S."/>
            <person name="Fry W."/>
            <person name="Meyers B.C."/>
            <person name="van West P."/>
            <person name="Ristaino J."/>
            <person name="Govers F."/>
            <person name="Birch P.R."/>
            <person name="Whisson S.C."/>
            <person name="Judelson H.S."/>
            <person name="Nusbaum C."/>
        </authorList>
    </citation>
    <scope>NUCLEOTIDE SEQUENCE [LARGE SCALE GENOMIC DNA]</scope>
    <scope>INDUCTION</scope>
    <source>
        <strain>T30-4</strain>
    </source>
</reference>
<reference key="2">
    <citation type="journal article" date="2001" name="Mol. Plant Microbe Interact.">
        <title>Chromosomal deletion in isolates of Phytophthora infestans correlates with virulence on R3, R10, and R11 potato lines.</title>
        <authorList>
            <person name="van der Lee T."/>
            <person name="Testa A."/>
            <person name="van 't Klooster J."/>
            <person name="van den Berg-Velthuis G."/>
            <person name="Govers F."/>
        </authorList>
    </citation>
    <scope>FUNCTION</scope>
    <scope>DISRUPTION PHENOTYPE</scope>
</reference>
<reference key="3">
    <citation type="journal article" date="2017" name="BMC Genomics">
        <title>RNA-seq of life stages of the oomycete Phytophthora infestans reveals dynamic changes in metabolic, signal transduction, and pathogenesis genes and a major role for calcium signaling in development.</title>
        <authorList>
            <person name="Ah-Fong A.M."/>
            <person name="Kim K.S."/>
            <person name="Judelson H.S."/>
        </authorList>
    </citation>
    <scope>INDUCTION</scope>
</reference>
<reference key="4">
    <citation type="journal article" date="2017" name="Front. Plant Sci.">
        <title>Conserved RXLR effector genes of Phytophthora infestans expressed at the early stage of potato infection are suppressive to host defense.</title>
        <authorList>
            <person name="Yin J."/>
            <person name="Gu B."/>
            <person name="Huang G."/>
            <person name="Tian Y."/>
            <person name="Quan J."/>
            <person name="Lindqvist-Kreuze H."/>
            <person name="Shan W."/>
        </authorList>
    </citation>
    <scope>INDUCTION</scope>
    <scope>DOMAIN</scope>
</reference>
<reference key="5">
    <citation type="journal article" date="2019" name="J. Exp. Bot.">
        <title>Phytophthora infestans RXLR effectors act in concert at diverse subcellular locations to enhance host colonization.</title>
        <authorList>
            <person name="Wang S."/>
            <person name="McLellan H."/>
            <person name="Bukharova T."/>
            <person name="He Q."/>
            <person name="Murphy F."/>
            <person name="Shi J."/>
            <person name="Sun S."/>
            <person name="van Weymers P."/>
            <person name="Ren Y."/>
            <person name="Thilliez G."/>
            <person name="Wang H."/>
            <person name="Chen X."/>
            <person name="Engelhardt S."/>
            <person name="Vleeshouwers V."/>
            <person name="Gilroy E.M."/>
            <person name="Whisson S.C."/>
            <person name="Hein I."/>
            <person name="Wang X."/>
            <person name="Tian Z."/>
            <person name="Birch P.R.J."/>
            <person name="Boevink P.C."/>
        </authorList>
    </citation>
    <scope>FUNCTION</scope>
    <scope>SUBCELLULAR LOCATION</scope>
</reference>